<comment type="function">
    <text evidence="1">Involved in the binding of tRNA to the ribosomes.</text>
</comment>
<comment type="subunit">
    <text evidence="1">Part of the 30S ribosomal subunit.</text>
</comment>
<comment type="similarity">
    <text evidence="1">Belongs to the universal ribosomal protein uS10 family.</text>
</comment>
<name>RS10_LISMF</name>
<evidence type="ECO:0000255" key="1">
    <source>
        <dbReference type="HAMAP-Rule" id="MF_00508"/>
    </source>
</evidence>
<evidence type="ECO:0000305" key="2"/>
<organism>
    <name type="scientific">Listeria monocytogenes serotype 4b (strain F2365)</name>
    <dbReference type="NCBI Taxonomy" id="265669"/>
    <lineage>
        <taxon>Bacteria</taxon>
        <taxon>Bacillati</taxon>
        <taxon>Bacillota</taxon>
        <taxon>Bacilli</taxon>
        <taxon>Bacillales</taxon>
        <taxon>Listeriaceae</taxon>
        <taxon>Listeria</taxon>
    </lineage>
</organism>
<proteinExistence type="inferred from homology"/>
<reference key="1">
    <citation type="journal article" date="2004" name="Nucleic Acids Res.">
        <title>Whole genome comparisons of serotype 4b and 1/2a strains of the food-borne pathogen Listeria monocytogenes reveal new insights into the core genome components of this species.</title>
        <authorList>
            <person name="Nelson K.E."/>
            <person name="Fouts D.E."/>
            <person name="Mongodin E.F."/>
            <person name="Ravel J."/>
            <person name="DeBoy R.T."/>
            <person name="Kolonay J.F."/>
            <person name="Rasko D.A."/>
            <person name="Angiuoli S.V."/>
            <person name="Gill S.R."/>
            <person name="Paulsen I.T."/>
            <person name="Peterson J.D."/>
            <person name="White O."/>
            <person name="Nelson W.C."/>
            <person name="Nierman W.C."/>
            <person name="Beanan M.J."/>
            <person name="Brinkac L.M."/>
            <person name="Daugherty S.C."/>
            <person name="Dodson R.J."/>
            <person name="Durkin A.S."/>
            <person name="Madupu R."/>
            <person name="Haft D.H."/>
            <person name="Selengut J."/>
            <person name="Van Aken S.E."/>
            <person name="Khouri H.M."/>
            <person name="Fedorova N."/>
            <person name="Forberger H.A."/>
            <person name="Tran B."/>
            <person name="Kathariou S."/>
            <person name="Wonderling L.D."/>
            <person name="Uhlich G.A."/>
            <person name="Bayles D.O."/>
            <person name="Luchansky J.B."/>
            <person name="Fraser C.M."/>
        </authorList>
    </citation>
    <scope>NUCLEOTIDE SEQUENCE [LARGE SCALE GENOMIC DNA]</scope>
    <source>
        <strain>F2365</strain>
    </source>
</reference>
<protein>
    <recommendedName>
        <fullName evidence="1">Small ribosomal subunit protein uS10</fullName>
    </recommendedName>
    <alternativeName>
        <fullName evidence="2">30S ribosomal protein S10</fullName>
    </alternativeName>
</protein>
<gene>
    <name evidence="1" type="primary">rpsJ</name>
    <name type="ordered locus">LMOf2365_2606</name>
</gene>
<accession>Q71WE5</accession>
<keyword id="KW-0687">Ribonucleoprotein</keyword>
<keyword id="KW-0689">Ribosomal protein</keyword>
<sequence length="102" mass="11682">MAKQKIRIRLKAYDHRILDQSAEKIVETAKRSGASVSGPIPLPTEKSIYTVLRAVHKYKDSREQFEMRTHKRLIDIVNPTPQTVDSLMRLDLPSGVDIEIKL</sequence>
<feature type="chain" id="PRO_0000146546" description="Small ribosomal subunit protein uS10">
    <location>
        <begin position="1"/>
        <end position="102"/>
    </location>
</feature>
<dbReference type="EMBL" id="AE017262">
    <property type="protein sequence ID" value="AAT05371.1"/>
    <property type="molecule type" value="Genomic_DNA"/>
</dbReference>
<dbReference type="RefSeq" id="WP_003720954.1">
    <property type="nucleotide sequence ID" value="NC_002973.6"/>
</dbReference>
<dbReference type="SMR" id="Q71WE5"/>
<dbReference type="GeneID" id="93240514"/>
<dbReference type="KEGG" id="lmf:LMOf2365_2606"/>
<dbReference type="HOGENOM" id="CLU_122625_1_3_9"/>
<dbReference type="GO" id="GO:1990904">
    <property type="term" value="C:ribonucleoprotein complex"/>
    <property type="evidence" value="ECO:0007669"/>
    <property type="project" value="UniProtKB-KW"/>
</dbReference>
<dbReference type="GO" id="GO:0005840">
    <property type="term" value="C:ribosome"/>
    <property type="evidence" value="ECO:0007669"/>
    <property type="project" value="UniProtKB-KW"/>
</dbReference>
<dbReference type="GO" id="GO:0003735">
    <property type="term" value="F:structural constituent of ribosome"/>
    <property type="evidence" value="ECO:0007669"/>
    <property type="project" value="InterPro"/>
</dbReference>
<dbReference type="GO" id="GO:0000049">
    <property type="term" value="F:tRNA binding"/>
    <property type="evidence" value="ECO:0007669"/>
    <property type="project" value="UniProtKB-UniRule"/>
</dbReference>
<dbReference type="GO" id="GO:0006412">
    <property type="term" value="P:translation"/>
    <property type="evidence" value="ECO:0007669"/>
    <property type="project" value="UniProtKB-UniRule"/>
</dbReference>
<dbReference type="FunFam" id="3.30.70.600:FF:000001">
    <property type="entry name" value="30S ribosomal protein S10"/>
    <property type="match status" value="1"/>
</dbReference>
<dbReference type="Gene3D" id="3.30.70.600">
    <property type="entry name" value="Ribosomal protein S10 domain"/>
    <property type="match status" value="1"/>
</dbReference>
<dbReference type="HAMAP" id="MF_00508">
    <property type="entry name" value="Ribosomal_uS10"/>
    <property type="match status" value="1"/>
</dbReference>
<dbReference type="InterPro" id="IPR001848">
    <property type="entry name" value="Ribosomal_uS10"/>
</dbReference>
<dbReference type="InterPro" id="IPR018268">
    <property type="entry name" value="Ribosomal_uS10_CS"/>
</dbReference>
<dbReference type="InterPro" id="IPR027486">
    <property type="entry name" value="Ribosomal_uS10_dom"/>
</dbReference>
<dbReference type="InterPro" id="IPR036838">
    <property type="entry name" value="Ribosomal_uS10_dom_sf"/>
</dbReference>
<dbReference type="NCBIfam" id="NF001861">
    <property type="entry name" value="PRK00596.1"/>
    <property type="match status" value="1"/>
</dbReference>
<dbReference type="NCBIfam" id="TIGR01049">
    <property type="entry name" value="rpsJ_bact"/>
    <property type="match status" value="1"/>
</dbReference>
<dbReference type="PANTHER" id="PTHR11700">
    <property type="entry name" value="30S RIBOSOMAL PROTEIN S10 FAMILY MEMBER"/>
    <property type="match status" value="1"/>
</dbReference>
<dbReference type="Pfam" id="PF00338">
    <property type="entry name" value="Ribosomal_S10"/>
    <property type="match status" value="1"/>
</dbReference>
<dbReference type="PRINTS" id="PR00971">
    <property type="entry name" value="RIBOSOMALS10"/>
</dbReference>
<dbReference type="SMART" id="SM01403">
    <property type="entry name" value="Ribosomal_S10"/>
    <property type="match status" value="1"/>
</dbReference>
<dbReference type="SUPFAM" id="SSF54999">
    <property type="entry name" value="Ribosomal protein S10"/>
    <property type="match status" value="1"/>
</dbReference>
<dbReference type="PROSITE" id="PS00361">
    <property type="entry name" value="RIBOSOMAL_S10"/>
    <property type="match status" value="1"/>
</dbReference>